<accession>B6YS49</accession>
<organism>
    <name type="scientific">Azobacteroides pseudotrichonymphae genomovar. CFP2</name>
    <dbReference type="NCBI Taxonomy" id="511995"/>
    <lineage>
        <taxon>Bacteria</taxon>
        <taxon>Pseudomonadati</taxon>
        <taxon>Bacteroidota</taxon>
        <taxon>Bacteroidia</taxon>
        <taxon>Bacteroidales</taxon>
        <taxon>Candidatus Azobacteroides</taxon>
    </lineage>
</organism>
<evidence type="ECO:0000255" key="1">
    <source>
        <dbReference type="HAMAP-Rule" id="MF_00044"/>
    </source>
</evidence>
<feature type="chain" id="PRO_1000090958" description="Aspartate--tRNA ligase">
    <location>
        <begin position="1"/>
        <end position="583"/>
    </location>
</feature>
<feature type="region of interest" description="Aspartate" evidence="1">
    <location>
        <begin position="197"/>
        <end position="200"/>
    </location>
</feature>
<feature type="binding site" evidence="1">
    <location>
        <position position="173"/>
    </location>
    <ligand>
        <name>L-aspartate</name>
        <dbReference type="ChEBI" id="CHEBI:29991"/>
    </ligand>
</feature>
<feature type="binding site" evidence="1">
    <location>
        <begin position="219"/>
        <end position="221"/>
    </location>
    <ligand>
        <name>ATP</name>
        <dbReference type="ChEBI" id="CHEBI:30616"/>
    </ligand>
</feature>
<feature type="binding site" evidence="1">
    <location>
        <position position="219"/>
    </location>
    <ligand>
        <name>L-aspartate</name>
        <dbReference type="ChEBI" id="CHEBI:29991"/>
    </ligand>
</feature>
<feature type="binding site" evidence="1">
    <location>
        <position position="228"/>
    </location>
    <ligand>
        <name>ATP</name>
        <dbReference type="ChEBI" id="CHEBI:30616"/>
    </ligand>
</feature>
<feature type="binding site" evidence="1">
    <location>
        <position position="444"/>
    </location>
    <ligand>
        <name>L-aspartate</name>
        <dbReference type="ChEBI" id="CHEBI:29991"/>
    </ligand>
</feature>
<feature type="binding site" evidence="1">
    <location>
        <position position="478"/>
    </location>
    <ligand>
        <name>ATP</name>
        <dbReference type="ChEBI" id="CHEBI:30616"/>
    </ligand>
</feature>
<feature type="binding site" evidence="1">
    <location>
        <position position="485"/>
    </location>
    <ligand>
        <name>L-aspartate</name>
        <dbReference type="ChEBI" id="CHEBI:29991"/>
    </ligand>
</feature>
<feature type="binding site" evidence="1">
    <location>
        <begin position="530"/>
        <end position="533"/>
    </location>
    <ligand>
        <name>ATP</name>
        <dbReference type="ChEBI" id="CHEBI:30616"/>
    </ligand>
</feature>
<reference key="1">
    <citation type="journal article" date="2008" name="Science">
        <title>Genome of an endosymbiont coupling N2 fixation to cellulolysis within RT protist cells in termite gut.</title>
        <authorList>
            <person name="Hongoh Y."/>
            <person name="Sharma V.K."/>
            <person name="Prakash T."/>
            <person name="Noda S."/>
            <person name="Toh H."/>
            <person name="Taylor T.D."/>
            <person name="Kudo T."/>
            <person name="Sakaki Y."/>
            <person name="Toyoda A."/>
            <person name="Hattori M."/>
            <person name="Ohkuma M."/>
        </authorList>
    </citation>
    <scope>NUCLEOTIDE SEQUENCE [LARGE SCALE GENOMIC DNA]</scope>
</reference>
<proteinExistence type="inferred from homology"/>
<protein>
    <recommendedName>
        <fullName evidence="1">Aspartate--tRNA ligase</fullName>
        <ecNumber evidence="1">6.1.1.12</ecNumber>
    </recommendedName>
    <alternativeName>
        <fullName evidence="1">Aspartyl-tRNA synthetase</fullName>
        <shortName evidence="1">AspRS</shortName>
    </alternativeName>
</protein>
<gene>
    <name evidence="1" type="primary">aspS</name>
    <name type="ordered locus">CFPG_758</name>
</gene>
<keyword id="KW-0030">Aminoacyl-tRNA synthetase</keyword>
<keyword id="KW-0067">ATP-binding</keyword>
<keyword id="KW-0963">Cytoplasm</keyword>
<keyword id="KW-0436">Ligase</keyword>
<keyword id="KW-0547">Nucleotide-binding</keyword>
<keyword id="KW-0648">Protein biosynthesis</keyword>
<keyword id="KW-1185">Reference proteome</keyword>
<sequence>MYRTNTCGELRIVNENQEVILCGWVQKSRRMSGIVFVDLRDRYGITQLIFNKKVNLALYNKALELGREWVIQIEGKVVKRFNKNSDIPTGDIEIIVSRLRTLNPSEVPPFTIEENTDGGDDLRMKYRYLDLRRTLIRSNLELRHQMVFAIRNYLNSHEFMEVETPVLINSTPEGARDFIVPSRMNMGEFYSLPQSPQLFKQLLMIAGFDRYFQVVKCFRDEDLRTDRQPEFTQVDCEMSFVEQEDILSIFEGLTKHLFKTIKGLDISGFSRLSYADAIRFYGSDKPDIRFGMQLVEIKDITIGRGFDVFDESEYVGAICAEGCAFYTRKQLDELTDFVKHPQIGAAGLIYVRYSFDGSLKSSVDKFYSTVDLQKWIDRVGAKQGDLVLILYGEKRETQKQLSRLRLEMGSRLGLRDKKQFGCLWVIDFPLFEYDNVLNRFFAKHHPFTSPKQEDVCLLETNPEFVRANAFDMVINGIEIGGGSIRIHNYELQKKIFALLGFSESYTQSQFGFFVDAFKYGAPPHGGIALGLDRFVATFAGLDSIRDCIAFPKNNSGRDTMVGAPSIISRERLSELNLIVEGWQ</sequence>
<dbReference type="EC" id="6.1.1.12" evidence="1"/>
<dbReference type="EMBL" id="AP010656">
    <property type="protein sequence ID" value="BAG84021.1"/>
    <property type="molecule type" value="Genomic_DNA"/>
</dbReference>
<dbReference type="RefSeq" id="WP_012573777.1">
    <property type="nucleotide sequence ID" value="NC_011565.1"/>
</dbReference>
<dbReference type="SMR" id="B6YS49"/>
<dbReference type="STRING" id="511995.CFPG_758"/>
<dbReference type="KEGG" id="aps:CFPG_758"/>
<dbReference type="eggNOG" id="COG0173">
    <property type="taxonomic scope" value="Bacteria"/>
</dbReference>
<dbReference type="HOGENOM" id="CLU_014330_3_2_10"/>
<dbReference type="OrthoDB" id="9802326at2"/>
<dbReference type="Proteomes" id="UP000000723">
    <property type="component" value="Chromosome"/>
</dbReference>
<dbReference type="GO" id="GO:0005737">
    <property type="term" value="C:cytoplasm"/>
    <property type="evidence" value="ECO:0007669"/>
    <property type="project" value="UniProtKB-SubCell"/>
</dbReference>
<dbReference type="GO" id="GO:0004815">
    <property type="term" value="F:aspartate-tRNA ligase activity"/>
    <property type="evidence" value="ECO:0007669"/>
    <property type="project" value="UniProtKB-UniRule"/>
</dbReference>
<dbReference type="GO" id="GO:0005524">
    <property type="term" value="F:ATP binding"/>
    <property type="evidence" value="ECO:0007669"/>
    <property type="project" value="UniProtKB-UniRule"/>
</dbReference>
<dbReference type="GO" id="GO:0003676">
    <property type="term" value="F:nucleic acid binding"/>
    <property type="evidence" value="ECO:0007669"/>
    <property type="project" value="InterPro"/>
</dbReference>
<dbReference type="GO" id="GO:0006422">
    <property type="term" value="P:aspartyl-tRNA aminoacylation"/>
    <property type="evidence" value="ECO:0007669"/>
    <property type="project" value="UniProtKB-UniRule"/>
</dbReference>
<dbReference type="CDD" id="cd00777">
    <property type="entry name" value="AspRS_core"/>
    <property type="match status" value="1"/>
</dbReference>
<dbReference type="CDD" id="cd04317">
    <property type="entry name" value="EcAspRS_like_N"/>
    <property type="match status" value="1"/>
</dbReference>
<dbReference type="Gene3D" id="3.30.930.10">
    <property type="entry name" value="Bira Bifunctional Protein, Domain 2"/>
    <property type="match status" value="1"/>
</dbReference>
<dbReference type="Gene3D" id="3.30.1360.30">
    <property type="entry name" value="GAD-like domain"/>
    <property type="match status" value="1"/>
</dbReference>
<dbReference type="Gene3D" id="2.40.50.140">
    <property type="entry name" value="Nucleic acid-binding proteins"/>
    <property type="match status" value="1"/>
</dbReference>
<dbReference type="HAMAP" id="MF_00044">
    <property type="entry name" value="Asp_tRNA_synth_type1"/>
    <property type="match status" value="1"/>
</dbReference>
<dbReference type="InterPro" id="IPR004364">
    <property type="entry name" value="Aa-tRNA-synt_II"/>
</dbReference>
<dbReference type="InterPro" id="IPR006195">
    <property type="entry name" value="aa-tRNA-synth_II"/>
</dbReference>
<dbReference type="InterPro" id="IPR045864">
    <property type="entry name" value="aa-tRNA-synth_II/BPL/LPL"/>
</dbReference>
<dbReference type="InterPro" id="IPR004524">
    <property type="entry name" value="Asp-tRNA-ligase_1"/>
</dbReference>
<dbReference type="InterPro" id="IPR047089">
    <property type="entry name" value="Asp-tRNA-ligase_1_N"/>
</dbReference>
<dbReference type="InterPro" id="IPR002312">
    <property type="entry name" value="Asp/Asn-tRNA-synth_IIb"/>
</dbReference>
<dbReference type="InterPro" id="IPR047090">
    <property type="entry name" value="AspRS_core"/>
</dbReference>
<dbReference type="InterPro" id="IPR004115">
    <property type="entry name" value="GAD-like_sf"/>
</dbReference>
<dbReference type="InterPro" id="IPR029351">
    <property type="entry name" value="GAD_dom"/>
</dbReference>
<dbReference type="InterPro" id="IPR012340">
    <property type="entry name" value="NA-bd_OB-fold"/>
</dbReference>
<dbReference type="InterPro" id="IPR004365">
    <property type="entry name" value="NA-bd_OB_tRNA"/>
</dbReference>
<dbReference type="NCBIfam" id="TIGR00459">
    <property type="entry name" value="aspS_bact"/>
    <property type="match status" value="1"/>
</dbReference>
<dbReference type="NCBIfam" id="NF001750">
    <property type="entry name" value="PRK00476.1"/>
    <property type="match status" value="1"/>
</dbReference>
<dbReference type="PANTHER" id="PTHR22594:SF5">
    <property type="entry name" value="ASPARTATE--TRNA LIGASE, MITOCHONDRIAL"/>
    <property type="match status" value="1"/>
</dbReference>
<dbReference type="PANTHER" id="PTHR22594">
    <property type="entry name" value="ASPARTYL/LYSYL-TRNA SYNTHETASE"/>
    <property type="match status" value="1"/>
</dbReference>
<dbReference type="Pfam" id="PF02938">
    <property type="entry name" value="GAD"/>
    <property type="match status" value="1"/>
</dbReference>
<dbReference type="Pfam" id="PF00152">
    <property type="entry name" value="tRNA-synt_2"/>
    <property type="match status" value="1"/>
</dbReference>
<dbReference type="Pfam" id="PF01336">
    <property type="entry name" value="tRNA_anti-codon"/>
    <property type="match status" value="1"/>
</dbReference>
<dbReference type="PRINTS" id="PR01042">
    <property type="entry name" value="TRNASYNTHASP"/>
</dbReference>
<dbReference type="SUPFAM" id="SSF55681">
    <property type="entry name" value="Class II aaRS and biotin synthetases"/>
    <property type="match status" value="1"/>
</dbReference>
<dbReference type="SUPFAM" id="SSF55261">
    <property type="entry name" value="GAD domain-like"/>
    <property type="match status" value="1"/>
</dbReference>
<dbReference type="SUPFAM" id="SSF50249">
    <property type="entry name" value="Nucleic acid-binding proteins"/>
    <property type="match status" value="1"/>
</dbReference>
<dbReference type="PROSITE" id="PS50862">
    <property type="entry name" value="AA_TRNA_LIGASE_II"/>
    <property type="match status" value="1"/>
</dbReference>
<name>SYD_AZOPC</name>
<comment type="function">
    <text evidence="1">Catalyzes the attachment of L-aspartate to tRNA(Asp) in a two-step reaction: L-aspartate is first activated by ATP to form Asp-AMP and then transferred to the acceptor end of tRNA(Asp).</text>
</comment>
<comment type="catalytic activity">
    <reaction evidence="1">
        <text>tRNA(Asp) + L-aspartate + ATP = L-aspartyl-tRNA(Asp) + AMP + diphosphate</text>
        <dbReference type="Rhea" id="RHEA:19649"/>
        <dbReference type="Rhea" id="RHEA-COMP:9660"/>
        <dbReference type="Rhea" id="RHEA-COMP:9678"/>
        <dbReference type="ChEBI" id="CHEBI:29991"/>
        <dbReference type="ChEBI" id="CHEBI:30616"/>
        <dbReference type="ChEBI" id="CHEBI:33019"/>
        <dbReference type="ChEBI" id="CHEBI:78442"/>
        <dbReference type="ChEBI" id="CHEBI:78516"/>
        <dbReference type="ChEBI" id="CHEBI:456215"/>
        <dbReference type="EC" id="6.1.1.12"/>
    </reaction>
</comment>
<comment type="subunit">
    <text evidence="1">Homodimer.</text>
</comment>
<comment type="subcellular location">
    <subcellularLocation>
        <location evidence="1">Cytoplasm</location>
    </subcellularLocation>
</comment>
<comment type="similarity">
    <text evidence="1">Belongs to the class-II aminoacyl-tRNA synthetase family. Type 1 subfamily.</text>
</comment>